<organism>
    <name type="scientific">Burkholderia thailandensis (strain ATCC 700388 / DSM 13276 / CCUG 48851 / CIP 106301 / E264)</name>
    <dbReference type="NCBI Taxonomy" id="271848"/>
    <lineage>
        <taxon>Bacteria</taxon>
        <taxon>Pseudomonadati</taxon>
        <taxon>Pseudomonadota</taxon>
        <taxon>Betaproteobacteria</taxon>
        <taxon>Burkholderiales</taxon>
        <taxon>Burkholderiaceae</taxon>
        <taxon>Burkholderia</taxon>
        <taxon>pseudomallei group</taxon>
    </lineage>
</organism>
<protein>
    <recommendedName>
        <fullName evidence="1">NADH-quinone oxidoreductase subunit D</fullName>
        <ecNumber evidence="1">7.1.1.-</ecNumber>
    </recommendedName>
    <alternativeName>
        <fullName evidence="1">NADH dehydrogenase I subunit D</fullName>
    </alternativeName>
    <alternativeName>
        <fullName evidence="1">NDH-1 subunit D</fullName>
    </alternativeName>
</protein>
<name>NUOD_BURTA</name>
<evidence type="ECO:0000255" key="1">
    <source>
        <dbReference type="HAMAP-Rule" id="MF_01358"/>
    </source>
</evidence>
<gene>
    <name evidence="1" type="primary">nuoD</name>
    <name type="ordered locus">BTH_I1064</name>
</gene>
<reference key="1">
    <citation type="journal article" date="2005" name="BMC Genomics">
        <title>Bacterial genome adaptation to niches: divergence of the potential virulence genes in three Burkholderia species of different survival strategies.</title>
        <authorList>
            <person name="Kim H.S."/>
            <person name="Schell M.A."/>
            <person name="Yu Y."/>
            <person name="Ulrich R.L."/>
            <person name="Sarria S.H."/>
            <person name="Nierman W.C."/>
            <person name="DeShazer D."/>
        </authorList>
    </citation>
    <scope>NUCLEOTIDE SEQUENCE [LARGE SCALE GENOMIC DNA]</scope>
    <source>
        <strain>ATCC 700388 / DSM 13276 / CCUG 48851 / CIP 106301 / E264</strain>
    </source>
</reference>
<sequence>MAEIKNYTLNFGPQHPAAHGVLRLVLELDGEVIQRADPHIGLLHRATEKLAESKTFIQSVPYMDRLDYVSMMVNEHGYVLAIEKLLGIEVPERAQYIRVLFDEITRVLNHLMWIGAHALDVGAMAVFLYAFREREDLMDVYEAVSGARMHAAYYRPGGVYRDLPEAMPQYKASKIRNERALAKMNEARSGSVLDFIDDFFTRFPKCVDEYETLLTDNRIWKQRLVGIGVVSPERALQLGLTGPMIRGSGIAWDLRKKQPYEVYDRIDFDIPVGVNGDCYDRYLVRVEEMRQSTRIAKQCIEWLRENPGPVITDNHKVAPPSRVGMKTNMEDLIHHFKLFTEGFHVPEGEAYAAVEHPKGEFGIYLVSDGANKPYRLKIRAPGYAHLSALDEMARGHMIADAVTIIGTQDIVFGEIDR</sequence>
<accession>Q2SZN2</accession>
<dbReference type="EC" id="7.1.1.-" evidence="1"/>
<dbReference type="EMBL" id="CP000086">
    <property type="protein sequence ID" value="ABC39058.1"/>
    <property type="molecule type" value="Genomic_DNA"/>
</dbReference>
<dbReference type="RefSeq" id="WP_009892172.1">
    <property type="nucleotide sequence ID" value="NZ_CP008785.1"/>
</dbReference>
<dbReference type="SMR" id="Q2SZN2"/>
<dbReference type="GeneID" id="45120816"/>
<dbReference type="KEGG" id="bte:BTH_I1064"/>
<dbReference type="HOGENOM" id="CLU_015134_1_1_4"/>
<dbReference type="Proteomes" id="UP000001930">
    <property type="component" value="Chromosome I"/>
</dbReference>
<dbReference type="GO" id="GO:0005886">
    <property type="term" value="C:plasma membrane"/>
    <property type="evidence" value="ECO:0007669"/>
    <property type="project" value="UniProtKB-SubCell"/>
</dbReference>
<dbReference type="GO" id="GO:0051287">
    <property type="term" value="F:NAD binding"/>
    <property type="evidence" value="ECO:0007669"/>
    <property type="project" value="InterPro"/>
</dbReference>
<dbReference type="GO" id="GO:0050136">
    <property type="term" value="F:NADH:ubiquinone reductase (non-electrogenic) activity"/>
    <property type="evidence" value="ECO:0007669"/>
    <property type="project" value="UniProtKB-UniRule"/>
</dbReference>
<dbReference type="GO" id="GO:0048038">
    <property type="term" value="F:quinone binding"/>
    <property type="evidence" value="ECO:0007669"/>
    <property type="project" value="UniProtKB-KW"/>
</dbReference>
<dbReference type="FunFam" id="1.10.645.10:FF:000005">
    <property type="entry name" value="NADH-quinone oxidoreductase subunit D"/>
    <property type="match status" value="1"/>
</dbReference>
<dbReference type="Gene3D" id="1.10.645.10">
    <property type="entry name" value="Cytochrome-c3 Hydrogenase, chain B"/>
    <property type="match status" value="1"/>
</dbReference>
<dbReference type="HAMAP" id="MF_01358">
    <property type="entry name" value="NDH1_NuoD"/>
    <property type="match status" value="1"/>
</dbReference>
<dbReference type="InterPro" id="IPR001135">
    <property type="entry name" value="NADH_Q_OxRdtase_suD"/>
</dbReference>
<dbReference type="InterPro" id="IPR014029">
    <property type="entry name" value="NADH_UbQ_OxRdtase_49kDa_CS"/>
</dbReference>
<dbReference type="InterPro" id="IPR022885">
    <property type="entry name" value="NDH1_su_D/H"/>
</dbReference>
<dbReference type="InterPro" id="IPR029014">
    <property type="entry name" value="NiFe-Hase_large"/>
</dbReference>
<dbReference type="NCBIfam" id="TIGR01962">
    <property type="entry name" value="NuoD"/>
    <property type="match status" value="1"/>
</dbReference>
<dbReference type="NCBIfam" id="NF004739">
    <property type="entry name" value="PRK06075.1"/>
    <property type="match status" value="1"/>
</dbReference>
<dbReference type="PANTHER" id="PTHR11993:SF10">
    <property type="entry name" value="NADH DEHYDROGENASE [UBIQUINONE] IRON-SULFUR PROTEIN 2, MITOCHONDRIAL"/>
    <property type="match status" value="1"/>
</dbReference>
<dbReference type="PANTHER" id="PTHR11993">
    <property type="entry name" value="NADH-UBIQUINONE OXIDOREDUCTASE 49 KDA SUBUNIT"/>
    <property type="match status" value="1"/>
</dbReference>
<dbReference type="Pfam" id="PF00346">
    <property type="entry name" value="Complex1_49kDa"/>
    <property type="match status" value="1"/>
</dbReference>
<dbReference type="SUPFAM" id="SSF56762">
    <property type="entry name" value="HydB/Nqo4-like"/>
    <property type="match status" value="1"/>
</dbReference>
<dbReference type="PROSITE" id="PS00535">
    <property type="entry name" value="COMPLEX1_49K"/>
    <property type="match status" value="1"/>
</dbReference>
<proteinExistence type="inferred from homology"/>
<comment type="function">
    <text evidence="1">NDH-1 shuttles electrons from NADH, via FMN and iron-sulfur (Fe-S) centers, to quinones in the respiratory chain. The immediate electron acceptor for the enzyme in this species is believed to be ubiquinone. Couples the redox reaction to proton translocation (for every two electrons transferred, four hydrogen ions are translocated across the cytoplasmic membrane), and thus conserves the redox energy in a proton gradient.</text>
</comment>
<comment type="catalytic activity">
    <reaction evidence="1">
        <text>a quinone + NADH + 5 H(+)(in) = a quinol + NAD(+) + 4 H(+)(out)</text>
        <dbReference type="Rhea" id="RHEA:57888"/>
        <dbReference type="ChEBI" id="CHEBI:15378"/>
        <dbReference type="ChEBI" id="CHEBI:24646"/>
        <dbReference type="ChEBI" id="CHEBI:57540"/>
        <dbReference type="ChEBI" id="CHEBI:57945"/>
        <dbReference type="ChEBI" id="CHEBI:132124"/>
    </reaction>
</comment>
<comment type="subunit">
    <text evidence="1">NDH-1 is composed of 14 different subunits. Subunits NuoB, C, D, E, F, and G constitute the peripheral sector of the complex.</text>
</comment>
<comment type="subcellular location">
    <subcellularLocation>
        <location evidence="1">Cell inner membrane</location>
        <topology evidence="1">Peripheral membrane protein</topology>
        <orientation evidence="1">Cytoplasmic side</orientation>
    </subcellularLocation>
</comment>
<comment type="similarity">
    <text evidence="1">Belongs to the complex I 49 kDa subunit family.</text>
</comment>
<keyword id="KW-0997">Cell inner membrane</keyword>
<keyword id="KW-1003">Cell membrane</keyword>
<keyword id="KW-0472">Membrane</keyword>
<keyword id="KW-0520">NAD</keyword>
<keyword id="KW-0874">Quinone</keyword>
<keyword id="KW-1278">Translocase</keyword>
<keyword id="KW-0813">Transport</keyword>
<keyword id="KW-0830">Ubiquinone</keyword>
<feature type="chain" id="PRO_0000371840" description="NADH-quinone oxidoreductase subunit D">
    <location>
        <begin position="1"/>
        <end position="417"/>
    </location>
</feature>